<sequence length="189" mass="20535">MSSESTAIFTPIIDALHNQQVIAYPTEAVFGLGCDPDSEQAVNALLALKQRPWEKGLILIAADYAQLTPYIDDTALNEQQRATMFASWPGPVTWVIPARSETSRLLTGRFNSLAVRVSDHPLVQQLCRQFGKPLVSTSANLSGQEPCRSADEVQQQFGAAFPLLAGSVGGRLNPSEIRDVLTGEQIRQG</sequence>
<evidence type="ECO:0000255" key="1">
    <source>
        <dbReference type="HAMAP-Rule" id="MF_01852"/>
    </source>
</evidence>
<accession>A8GKG1</accession>
<keyword id="KW-0067">ATP-binding</keyword>
<keyword id="KW-0963">Cytoplasm</keyword>
<keyword id="KW-0547">Nucleotide-binding</keyword>
<keyword id="KW-0548">Nucleotidyltransferase</keyword>
<keyword id="KW-0808">Transferase</keyword>
<keyword id="KW-0819">tRNA processing</keyword>
<gene>
    <name evidence="1" type="primary">tsaC</name>
    <name type="synonym">rimN</name>
    <name type="ordered locus">Spro_4507</name>
</gene>
<organism>
    <name type="scientific">Serratia proteamaculans (strain 568)</name>
    <dbReference type="NCBI Taxonomy" id="399741"/>
    <lineage>
        <taxon>Bacteria</taxon>
        <taxon>Pseudomonadati</taxon>
        <taxon>Pseudomonadota</taxon>
        <taxon>Gammaproteobacteria</taxon>
        <taxon>Enterobacterales</taxon>
        <taxon>Yersiniaceae</taxon>
        <taxon>Serratia</taxon>
    </lineage>
</organism>
<dbReference type="EC" id="2.7.7.87" evidence="1"/>
<dbReference type="EMBL" id="CP000826">
    <property type="protein sequence ID" value="ABV43601.1"/>
    <property type="molecule type" value="Genomic_DNA"/>
</dbReference>
<dbReference type="SMR" id="A8GKG1"/>
<dbReference type="STRING" id="399741.Spro_4507"/>
<dbReference type="KEGG" id="spe:Spro_4507"/>
<dbReference type="eggNOG" id="COG0009">
    <property type="taxonomic scope" value="Bacteria"/>
</dbReference>
<dbReference type="HOGENOM" id="CLU_031397_6_0_6"/>
<dbReference type="OrthoDB" id="9814580at2"/>
<dbReference type="GO" id="GO:0005737">
    <property type="term" value="C:cytoplasm"/>
    <property type="evidence" value="ECO:0007669"/>
    <property type="project" value="UniProtKB-SubCell"/>
</dbReference>
<dbReference type="GO" id="GO:0005524">
    <property type="term" value="F:ATP binding"/>
    <property type="evidence" value="ECO:0007669"/>
    <property type="project" value="UniProtKB-UniRule"/>
</dbReference>
<dbReference type="GO" id="GO:0003725">
    <property type="term" value="F:double-stranded RNA binding"/>
    <property type="evidence" value="ECO:0007669"/>
    <property type="project" value="InterPro"/>
</dbReference>
<dbReference type="GO" id="GO:0061710">
    <property type="term" value="F:L-threonylcarbamoyladenylate synthase"/>
    <property type="evidence" value="ECO:0007669"/>
    <property type="project" value="UniProtKB-EC"/>
</dbReference>
<dbReference type="GO" id="GO:0000049">
    <property type="term" value="F:tRNA binding"/>
    <property type="evidence" value="ECO:0007669"/>
    <property type="project" value="TreeGrafter"/>
</dbReference>
<dbReference type="GO" id="GO:0006450">
    <property type="term" value="P:regulation of translational fidelity"/>
    <property type="evidence" value="ECO:0007669"/>
    <property type="project" value="TreeGrafter"/>
</dbReference>
<dbReference type="GO" id="GO:0002949">
    <property type="term" value="P:tRNA threonylcarbamoyladenosine modification"/>
    <property type="evidence" value="ECO:0007669"/>
    <property type="project" value="UniProtKB-UniRule"/>
</dbReference>
<dbReference type="FunFam" id="3.90.870.10:FF:000004">
    <property type="entry name" value="Threonylcarbamoyl-AMP synthase"/>
    <property type="match status" value="1"/>
</dbReference>
<dbReference type="Gene3D" id="3.90.870.10">
    <property type="entry name" value="DHBP synthase"/>
    <property type="match status" value="1"/>
</dbReference>
<dbReference type="HAMAP" id="MF_01852">
    <property type="entry name" value="TsaC"/>
    <property type="match status" value="1"/>
</dbReference>
<dbReference type="InterPro" id="IPR017945">
    <property type="entry name" value="DHBP_synth_RibB-like_a/b_dom"/>
</dbReference>
<dbReference type="InterPro" id="IPR006070">
    <property type="entry name" value="Sua5-like_dom"/>
</dbReference>
<dbReference type="InterPro" id="IPR023535">
    <property type="entry name" value="TC-AMP_synthase"/>
</dbReference>
<dbReference type="InterPro" id="IPR050156">
    <property type="entry name" value="TC-AMP_synthase_SUA5"/>
</dbReference>
<dbReference type="NCBIfam" id="NF007919">
    <property type="entry name" value="PRK10634.1"/>
    <property type="match status" value="1"/>
</dbReference>
<dbReference type="PANTHER" id="PTHR17490">
    <property type="entry name" value="SUA5"/>
    <property type="match status" value="1"/>
</dbReference>
<dbReference type="PANTHER" id="PTHR17490:SF18">
    <property type="entry name" value="THREONYLCARBAMOYL-AMP SYNTHASE"/>
    <property type="match status" value="1"/>
</dbReference>
<dbReference type="Pfam" id="PF01300">
    <property type="entry name" value="Sua5_yciO_yrdC"/>
    <property type="match status" value="1"/>
</dbReference>
<dbReference type="SUPFAM" id="SSF55821">
    <property type="entry name" value="YrdC/RibB"/>
    <property type="match status" value="1"/>
</dbReference>
<dbReference type="PROSITE" id="PS51163">
    <property type="entry name" value="YRDC"/>
    <property type="match status" value="1"/>
</dbReference>
<comment type="function">
    <text evidence="1">Required for the formation of a threonylcarbamoyl group on adenosine at position 37 (t(6)A37) in tRNAs that read codons beginning with adenine. Catalyzes the conversion of L-threonine, HCO(3)(-)/CO(2) and ATP to give threonylcarbamoyl-AMP (TC-AMP) as the acyladenylate intermediate, with the release of diphosphate.</text>
</comment>
<comment type="catalytic activity">
    <reaction evidence="1">
        <text>L-threonine + hydrogencarbonate + ATP = L-threonylcarbamoyladenylate + diphosphate + H2O</text>
        <dbReference type="Rhea" id="RHEA:36407"/>
        <dbReference type="ChEBI" id="CHEBI:15377"/>
        <dbReference type="ChEBI" id="CHEBI:17544"/>
        <dbReference type="ChEBI" id="CHEBI:30616"/>
        <dbReference type="ChEBI" id="CHEBI:33019"/>
        <dbReference type="ChEBI" id="CHEBI:57926"/>
        <dbReference type="ChEBI" id="CHEBI:73682"/>
        <dbReference type="EC" id="2.7.7.87"/>
    </reaction>
</comment>
<comment type="subcellular location">
    <subcellularLocation>
        <location evidence="1">Cytoplasm</location>
    </subcellularLocation>
</comment>
<comment type="similarity">
    <text evidence="1">Belongs to the SUA5 family. TsaC subfamily.</text>
</comment>
<proteinExistence type="inferred from homology"/>
<feature type="chain" id="PRO_0000352973" description="Threonylcarbamoyl-AMP synthase">
    <location>
        <begin position="1"/>
        <end position="189"/>
    </location>
</feature>
<feature type="domain" description="YrdC-like" evidence="1">
    <location>
        <begin position="6"/>
        <end position="189"/>
    </location>
</feature>
<name>TSAC_SERP5</name>
<protein>
    <recommendedName>
        <fullName evidence="1">Threonylcarbamoyl-AMP synthase</fullName>
        <shortName evidence="1">TC-AMP synthase</shortName>
        <ecNumber evidence="1">2.7.7.87</ecNumber>
    </recommendedName>
    <alternativeName>
        <fullName evidence="1">L-threonylcarbamoyladenylate synthase</fullName>
    </alternativeName>
    <alternativeName>
        <fullName evidence="1">t(6)A37 threonylcarbamoyladenosine biosynthesis protein TsaC</fullName>
    </alternativeName>
    <alternativeName>
        <fullName evidence="1">tRNA threonylcarbamoyladenosine biosynthesis protein TsaC</fullName>
    </alternativeName>
</protein>
<reference key="1">
    <citation type="submission" date="2007-09" db="EMBL/GenBank/DDBJ databases">
        <title>Complete sequence of chromosome of Serratia proteamaculans 568.</title>
        <authorList>
            <consortium name="US DOE Joint Genome Institute"/>
            <person name="Copeland A."/>
            <person name="Lucas S."/>
            <person name="Lapidus A."/>
            <person name="Barry K."/>
            <person name="Glavina del Rio T."/>
            <person name="Dalin E."/>
            <person name="Tice H."/>
            <person name="Pitluck S."/>
            <person name="Chain P."/>
            <person name="Malfatti S."/>
            <person name="Shin M."/>
            <person name="Vergez L."/>
            <person name="Schmutz J."/>
            <person name="Larimer F."/>
            <person name="Land M."/>
            <person name="Hauser L."/>
            <person name="Kyrpides N."/>
            <person name="Kim E."/>
            <person name="Taghavi S."/>
            <person name="Newman L."/>
            <person name="Vangronsveld J."/>
            <person name="van der Lelie D."/>
            <person name="Richardson P."/>
        </authorList>
    </citation>
    <scope>NUCLEOTIDE SEQUENCE [LARGE SCALE GENOMIC DNA]</scope>
    <source>
        <strain>568</strain>
    </source>
</reference>